<name>RS18_LEGPL</name>
<sequence>MSAYFRRKKMCRFSAEGGNEIDYKDINLLKNYITETGKIVPSRITGTQTRFQRQLAKAIKHARFIGLLPYCDSHR</sequence>
<organism>
    <name type="scientific">Legionella pneumophila (strain Lens)</name>
    <dbReference type="NCBI Taxonomy" id="297245"/>
    <lineage>
        <taxon>Bacteria</taxon>
        <taxon>Pseudomonadati</taxon>
        <taxon>Pseudomonadota</taxon>
        <taxon>Gammaproteobacteria</taxon>
        <taxon>Legionellales</taxon>
        <taxon>Legionellaceae</taxon>
        <taxon>Legionella</taxon>
    </lineage>
</organism>
<keyword id="KW-0687">Ribonucleoprotein</keyword>
<keyword id="KW-0689">Ribosomal protein</keyword>
<keyword id="KW-0694">RNA-binding</keyword>
<keyword id="KW-0699">rRNA-binding</keyword>
<reference key="1">
    <citation type="journal article" date="2004" name="Nat. Genet.">
        <title>Evidence in the Legionella pneumophila genome for exploitation of host cell functions and high genome plasticity.</title>
        <authorList>
            <person name="Cazalet C."/>
            <person name="Rusniok C."/>
            <person name="Brueggemann H."/>
            <person name="Zidane N."/>
            <person name="Magnier A."/>
            <person name="Ma L."/>
            <person name="Tichit M."/>
            <person name="Jarraud S."/>
            <person name="Bouchier C."/>
            <person name="Vandenesch F."/>
            <person name="Kunst F."/>
            <person name="Etienne J."/>
            <person name="Glaser P."/>
            <person name="Buchrieser C."/>
        </authorList>
    </citation>
    <scope>NUCLEOTIDE SEQUENCE [LARGE SCALE GENOMIC DNA]</scope>
    <source>
        <strain>Lens</strain>
    </source>
</reference>
<evidence type="ECO:0000255" key="1">
    <source>
        <dbReference type="HAMAP-Rule" id="MF_00270"/>
    </source>
</evidence>
<evidence type="ECO:0000305" key="2"/>
<gene>
    <name evidence="1" type="primary">rpsR</name>
    <name type="ordered locus">lpl1434</name>
</gene>
<dbReference type="EMBL" id="CR628337">
    <property type="protein sequence ID" value="CAH15674.1"/>
    <property type="molecule type" value="Genomic_DNA"/>
</dbReference>
<dbReference type="RefSeq" id="WP_010947320.1">
    <property type="nucleotide sequence ID" value="NC_006369.1"/>
</dbReference>
<dbReference type="SMR" id="Q5WWL9"/>
<dbReference type="GeneID" id="57035582"/>
<dbReference type="KEGG" id="lpf:lpl1434"/>
<dbReference type="LegioList" id="lpl1434"/>
<dbReference type="HOGENOM" id="CLU_148710_2_3_6"/>
<dbReference type="Proteomes" id="UP000002517">
    <property type="component" value="Chromosome"/>
</dbReference>
<dbReference type="GO" id="GO:0022627">
    <property type="term" value="C:cytosolic small ribosomal subunit"/>
    <property type="evidence" value="ECO:0007669"/>
    <property type="project" value="TreeGrafter"/>
</dbReference>
<dbReference type="GO" id="GO:0070181">
    <property type="term" value="F:small ribosomal subunit rRNA binding"/>
    <property type="evidence" value="ECO:0007669"/>
    <property type="project" value="TreeGrafter"/>
</dbReference>
<dbReference type="GO" id="GO:0003735">
    <property type="term" value="F:structural constituent of ribosome"/>
    <property type="evidence" value="ECO:0007669"/>
    <property type="project" value="InterPro"/>
</dbReference>
<dbReference type="GO" id="GO:0006412">
    <property type="term" value="P:translation"/>
    <property type="evidence" value="ECO:0007669"/>
    <property type="project" value="UniProtKB-UniRule"/>
</dbReference>
<dbReference type="Gene3D" id="4.10.640.10">
    <property type="entry name" value="Ribosomal protein S18"/>
    <property type="match status" value="1"/>
</dbReference>
<dbReference type="HAMAP" id="MF_00270">
    <property type="entry name" value="Ribosomal_bS18"/>
    <property type="match status" value="1"/>
</dbReference>
<dbReference type="InterPro" id="IPR001648">
    <property type="entry name" value="Ribosomal_bS18"/>
</dbReference>
<dbReference type="InterPro" id="IPR018275">
    <property type="entry name" value="Ribosomal_bS18_CS"/>
</dbReference>
<dbReference type="InterPro" id="IPR036870">
    <property type="entry name" value="Ribosomal_bS18_sf"/>
</dbReference>
<dbReference type="NCBIfam" id="TIGR00165">
    <property type="entry name" value="S18"/>
    <property type="match status" value="1"/>
</dbReference>
<dbReference type="PANTHER" id="PTHR13479">
    <property type="entry name" value="30S RIBOSOMAL PROTEIN S18"/>
    <property type="match status" value="1"/>
</dbReference>
<dbReference type="PANTHER" id="PTHR13479:SF40">
    <property type="entry name" value="SMALL RIBOSOMAL SUBUNIT PROTEIN BS18M"/>
    <property type="match status" value="1"/>
</dbReference>
<dbReference type="Pfam" id="PF01084">
    <property type="entry name" value="Ribosomal_S18"/>
    <property type="match status" value="1"/>
</dbReference>
<dbReference type="PRINTS" id="PR00974">
    <property type="entry name" value="RIBOSOMALS18"/>
</dbReference>
<dbReference type="SUPFAM" id="SSF46911">
    <property type="entry name" value="Ribosomal protein S18"/>
    <property type="match status" value="1"/>
</dbReference>
<dbReference type="PROSITE" id="PS00057">
    <property type="entry name" value="RIBOSOMAL_S18"/>
    <property type="match status" value="1"/>
</dbReference>
<protein>
    <recommendedName>
        <fullName evidence="1">Small ribosomal subunit protein bS18</fullName>
    </recommendedName>
    <alternativeName>
        <fullName evidence="2">30S ribosomal protein S18</fullName>
    </alternativeName>
</protein>
<comment type="function">
    <text evidence="1">Binds as a heterodimer with protein bS6 to the central domain of the 16S rRNA, where it helps stabilize the platform of the 30S subunit.</text>
</comment>
<comment type="subunit">
    <text evidence="1">Part of the 30S ribosomal subunit. Forms a tight heterodimer with protein bS6.</text>
</comment>
<comment type="similarity">
    <text evidence="1">Belongs to the bacterial ribosomal protein bS18 family.</text>
</comment>
<accession>Q5WWL9</accession>
<proteinExistence type="inferred from homology"/>
<feature type="chain" id="PRO_1000003526" description="Small ribosomal subunit protein bS18">
    <location>
        <begin position="1"/>
        <end position="75"/>
    </location>
</feature>